<comment type="function">
    <text evidence="1">Involved in lipopolysaccharide (LPS) biosynthesis. Translocates lipid A-core from the inner to the outer leaflet of the inner membrane. Transmembrane domains (TMD) form a pore in the inner membrane and the ATP-binding domain (NBD) is responsible for energy generation.</text>
</comment>
<comment type="catalytic activity">
    <reaction evidence="1">
        <text>ATP + H2O + lipid A-core oligosaccharideSide 1 = ADP + phosphate + lipid A-core oligosaccharideSide 2.</text>
        <dbReference type="EC" id="7.5.2.6"/>
    </reaction>
</comment>
<comment type="subunit">
    <text evidence="1">Homodimer.</text>
</comment>
<comment type="subcellular location">
    <subcellularLocation>
        <location evidence="1">Cell inner membrane</location>
        <topology evidence="1">Multi-pass membrane protein</topology>
    </subcellularLocation>
</comment>
<comment type="domain">
    <text evidence="1">In MsbA the ATP-binding domain (NBD) and the transmembrane domain (TMD) are fused.</text>
</comment>
<comment type="similarity">
    <text evidence="1">Belongs to the ABC transporter superfamily. Lipid exporter (TC 3.A.1.106) family.</text>
</comment>
<proteinExistence type="inferred from homology"/>
<keyword id="KW-0067">ATP-binding</keyword>
<keyword id="KW-0997">Cell inner membrane</keyword>
<keyword id="KW-1003">Cell membrane</keyword>
<keyword id="KW-0445">Lipid transport</keyword>
<keyword id="KW-0472">Membrane</keyword>
<keyword id="KW-0547">Nucleotide-binding</keyword>
<keyword id="KW-1278">Translocase</keyword>
<keyword id="KW-0812">Transmembrane</keyword>
<keyword id="KW-1133">Transmembrane helix</keyword>
<keyword id="KW-0813">Transport</keyword>
<gene>
    <name evidence="1" type="primary">msbA</name>
    <name type="ordered locus">Psyr_0536</name>
</gene>
<organism>
    <name type="scientific">Pseudomonas syringae pv. syringae (strain B728a)</name>
    <dbReference type="NCBI Taxonomy" id="205918"/>
    <lineage>
        <taxon>Bacteria</taxon>
        <taxon>Pseudomonadati</taxon>
        <taxon>Pseudomonadota</taxon>
        <taxon>Gammaproteobacteria</taxon>
        <taxon>Pseudomonadales</taxon>
        <taxon>Pseudomonadaceae</taxon>
        <taxon>Pseudomonas</taxon>
        <taxon>Pseudomonas syringae</taxon>
    </lineage>
</organism>
<dbReference type="EC" id="7.5.2.6" evidence="1"/>
<dbReference type="EMBL" id="CP000075">
    <property type="protein sequence ID" value="AAY35606.1"/>
    <property type="molecule type" value="Genomic_DNA"/>
</dbReference>
<dbReference type="RefSeq" id="WP_011266474.1">
    <property type="nucleotide sequence ID" value="NC_007005.1"/>
</dbReference>
<dbReference type="RefSeq" id="YP_233644.1">
    <property type="nucleotide sequence ID" value="NC_007005.1"/>
</dbReference>
<dbReference type="SMR" id="Q4ZZ16"/>
<dbReference type="STRING" id="205918.Psyr_0536"/>
<dbReference type="KEGG" id="psb:Psyr_0536"/>
<dbReference type="PATRIC" id="fig|205918.7.peg.558"/>
<dbReference type="eggNOG" id="COG1132">
    <property type="taxonomic scope" value="Bacteria"/>
</dbReference>
<dbReference type="HOGENOM" id="CLU_000604_84_3_6"/>
<dbReference type="OrthoDB" id="9806127at2"/>
<dbReference type="Proteomes" id="UP000000426">
    <property type="component" value="Chromosome"/>
</dbReference>
<dbReference type="GO" id="GO:0005886">
    <property type="term" value="C:plasma membrane"/>
    <property type="evidence" value="ECO:0007669"/>
    <property type="project" value="UniProtKB-SubCell"/>
</dbReference>
<dbReference type="GO" id="GO:0015421">
    <property type="term" value="F:ABC-type oligopeptide transporter activity"/>
    <property type="evidence" value="ECO:0007669"/>
    <property type="project" value="TreeGrafter"/>
</dbReference>
<dbReference type="GO" id="GO:0005524">
    <property type="term" value="F:ATP binding"/>
    <property type="evidence" value="ECO:0007669"/>
    <property type="project" value="UniProtKB-KW"/>
</dbReference>
<dbReference type="GO" id="GO:0016887">
    <property type="term" value="F:ATP hydrolysis activity"/>
    <property type="evidence" value="ECO:0007669"/>
    <property type="project" value="InterPro"/>
</dbReference>
<dbReference type="GO" id="GO:0034040">
    <property type="term" value="F:ATPase-coupled lipid transmembrane transporter activity"/>
    <property type="evidence" value="ECO:0007669"/>
    <property type="project" value="InterPro"/>
</dbReference>
<dbReference type="CDD" id="cd18552">
    <property type="entry name" value="ABC_6TM_MsbA_like"/>
    <property type="match status" value="1"/>
</dbReference>
<dbReference type="FunFam" id="3.40.50.300:FF:000140">
    <property type="entry name" value="Lipid A export ATP-binding/permease protein MsbA"/>
    <property type="match status" value="1"/>
</dbReference>
<dbReference type="Gene3D" id="1.20.1560.10">
    <property type="entry name" value="ABC transporter type 1, transmembrane domain"/>
    <property type="match status" value="1"/>
</dbReference>
<dbReference type="Gene3D" id="3.40.50.300">
    <property type="entry name" value="P-loop containing nucleotide triphosphate hydrolases"/>
    <property type="match status" value="1"/>
</dbReference>
<dbReference type="InterPro" id="IPR003593">
    <property type="entry name" value="AAA+_ATPase"/>
</dbReference>
<dbReference type="InterPro" id="IPR011527">
    <property type="entry name" value="ABC1_TM_dom"/>
</dbReference>
<dbReference type="InterPro" id="IPR036640">
    <property type="entry name" value="ABC1_TM_sf"/>
</dbReference>
<dbReference type="InterPro" id="IPR003439">
    <property type="entry name" value="ABC_transporter-like_ATP-bd"/>
</dbReference>
<dbReference type="InterPro" id="IPR017871">
    <property type="entry name" value="ABC_transporter-like_CS"/>
</dbReference>
<dbReference type="InterPro" id="IPR011917">
    <property type="entry name" value="ABC_transpr_lipidA"/>
</dbReference>
<dbReference type="InterPro" id="IPR027417">
    <property type="entry name" value="P-loop_NTPase"/>
</dbReference>
<dbReference type="InterPro" id="IPR039421">
    <property type="entry name" value="Type_1_exporter"/>
</dbReference>
<dbReference type="NCBIfam" id="TIGR02203">
    <property type="entry name" value="MsbA_lipidA"/>
    <property type="match status" value="1"/>
</dbReference>
<dbReference type="PANTHER" id="PTHR43394:SF1">
    <property type="entry name" value="ATP-BINDING CASSETTE SUB-FAMILY B MEMBER 10, MITOCHONDRIAL"/>
    <property type="match status" value="1"/>
</dbReference>
<dbReference type="PANTHER" id="PTHR43394">
    <property type="entry name" value="ATP-DEPENDENT PERMEASE MDL1, MITOCHONDRIAL"/>
    <property type="match status" value="1"/>
</dbReference>
<dbReference type="Pfam" id="PF00664">
    <property type="entry name" value="ABC_membrane"/>
    <property type="match status" value="1"/>
</dbReference>
<dbReference type="Pfam" id="PF00005">
    <property type="entry name" value="ABC_tran"/>
    <property type="match status" value="1"/>
</dbReference>
<dbReference type="SMART" id="SM00382">
    <property type="entry name" value="AAA"/>
    <property type="match status" value="1"/>
</dbReference>
<dbReference type="SUPFAM" id="SSF90123">
    <property type="entry name" value="ABC transporter transmembrane region"/>
    <property type="match status" value="1"/>
</dbReference>
<dbReference type="SUPFAM" id="SSF52540">
    <property type="entry name" value="P-loop containing nucleoside triphosphate hydrolases"/>
    <property type="match status" value="1"/>
</dbReference>
<dbReference type="PROSITE" id="PS50929">
    <property type="entry name" value="ABC_TM1F"/>
    <property type="match status" value="1"/>
</dbReference>
<dbReference type="PROSITE" id="PS00211">
    <property type="entry name" value="ABC_TRANSPORTER_1"/>
    <property type="match status" value="1"/>
</dbReference>
<dbReference type="PROSITE" id="PS50893">
    <property type="entry name" value="ABC_TRANSPORTER_2"/>
    <property type="match status" value="1"/>
</dbReference>
<dbReference type="PROSITE" id="PS51239">
    <property type="entry name" value="MSBA"/>
    <property type="match status" value="1"/>
</dbReference>
<evidence type="ECO:0000255" key="1">
    <source>
        <dbReference type="HAMAP-Rule" id="MF_01703"/>
    </source>
</evidence>
<sequence length="600" mass="65723">MTTSESSATSSVKIYFRLLSYVRPYVGIFLLSIIGFVIFASTQPMLAGILKYFVDGLTNPEAVLFPNVPYLRELQLLQAVPLLIVLIAAWQGLGSFLGNYFLAKVSLGLVHDLRVELFNKLLVLPNRYFDTTNSGHLISRITFNVTMVTGAATDAIKVVIREGLTVVFLFIYLLMMNWKLTLVMLAILPLIAVMVGTASKKFRKQSKKIQVAMGDVTHVASETIQGYRVVRSFGGEAYEQARFAQASNSNTQKQLRMTKTGAIYTPMLQLVIYSAMAVLMFLVLFLRGEATAGDLVAYITAAGLLPKPIRQLSEVSSTIQKGVAGAESIFEQLDVEEEVDTGTIERERVTGHLEVKNLSFFYPQTARQVLNDISFSAAPGQMIALVGRSGSGKSTLANLIPRFYGHDIGNILLDGVEINDYRLRNLRRHIAQVNQNVTLFNDTIANNIAYGDLAGAPRADIEAAAADAYAREFIDQLPQGFDTQVGENGVLLSGGQRQRLAIARALLKNAPLLILDEATSALDTESERHIQAALDHVMKGRTTLVIAHRLSTIEKADLILVMDAGQIVERGTHTELLAQNGYYARLHAMGLDEPAPVGAV</sequence>
<accession>Q4ZZ16</accession>
<protein>
    <recommendedName>
        <fullName evidence="1">ATP-dependent lipid A-core flippase</fullName>
        <ecNumber evidence="1">7.5.2.6</ecNumber>
    </recommendedName>
    <alternativeName>
        <fullName evidence="1">Lipid A export ATP-binding/permease protein MsbA</fullName>
    </alternativeName>
</protein>
<name>MSBA_PSEU2</name>
<reference key="1">
    <citation type="journal article" date="2005" name="Proc. Natl. Acad. Sci. U.S.A.">
        <title>Comparison of the complete genome sequences of Pseudomonas syringae pv. syringae B728a and pv. tomato DC3000.</title>
        <authorList>
            <person name="Feil H."/>
            <person name="Feil W.S."/>
            <person name="Chain P."/>
            <person name="Larimer F."/>
            <person name="Dibartolo G."/>
            <person name="Copeland A."/>
            <person name="Lykidis A."/>
            <person name="Trong S."/>
            <person name="Nolan M."/>
            <person name="Goltsman E."/>
            <person name="Thiel J."/>
            <person name="Malfatti S."/>
            <person name="Loper J.E."/>
            <person name="Lapidus A."/>
            <person name="Detter J.C."/>
            <person name="Land M."/>
            <person name="Richardson P.M."/>
            <person name="Kyrpides N.C."/>
            <person name="Ivanova N."/>
            <person name="Lindow S.E."/>
        </authorList>
    </citation>
    <scope>NUCLEOTIDE SEQUENCE [LARGE SCALE GENOMIC DNA]</scope>
    <source>
        <strain>B728a</strain>
    </source>
</reference>
<feature type="chain" id="PRO_0000271643" description="ATP-dependent lipid A-core flippase">
    <location>
        <begin position="1"/>
        <end position="600"/>
    </location>
</feature>
<feature type="transmembrane region" description="Helical" evidence="1">
    <location>
        <begin position="26"/>
        <end position="46"/>
    </location>
</feature>
<feature type="transmembrane region" description="Helical" evidence="1">
    <location>
        <begin position="82"/>
        <end position="102"/>
    </location>
</feature>
<feature type="transmembrane region" description="Helical" evidence="1">
    <location>
        <begin position="167"/>
        <end position="187"/>
    </location>
</feature>
<feature type="transmembrane region" description="Helical" evidence="1">
    <location>
        <begin position="266"/>
        <end position="286"/>
    </location>
</feature>
<feature type="domain" description="ABC transmembrane type-1" evidence="1">
    <location>
        <begin position="30"/>
        <end position="321"/>
    </location>
</feature>
<feature type="domain" description="ABC transporter" evidence="1">
    <location>
        <begin position="353"/>
        <end position="589"/>
    </location>
</feature>
<feature type="binding site" evidence="1">
    <location>
        <begin position="387"/>
        <end position="394"/>
    </location>
    <ligand>
        <name>ATP</name>
        <dbReference type="ChEBI" id="CHEBI:30616"/>
    </ligand>
</feature>